<organism>
    <name type="scientific">Tabanus yao</name>
    <name type="common">Horsefly</name>
    <dbReference type="NCBI Taxonomy" id="485572"/>
    <lineage>
        <taxon>Eukaryota</taxon>
        <taxon>Metazoa</taxon>
        <taxon>Ecdysozoa</taxon>
        <taxon>Arthropoda</taxon>
        <taxon>Hexapoda</taxon>
        <taxon>Insecta</taxon>
        <taxon>Pterygota</taxon>
        <taxon>Neoptera</taxon>
        <taxon>Endopterygota</taxon>
        <taxon>Diptera</taxon>
        <taxon>Brachycera</taxon>
        <taxon>Tabanomorpha</taxon>
        <taxon>Tabanoidea</taxon>
        <taxon>Tabanidae</taxon>
        <taxon>Tabanus</taxon>
    </lineage>
</organism>
<feature type="signal peptide" evidence="5">
    <location>
        <begin position="1"/>
        <end position="23"/>
    </location>
</feature>
<feature type="chain" id="PRO_0000456094" description="Tabinhibitin 4" evidence="5">
    <location>
        <begin position="24"/>
        <end position="249"/>
    </location>
</feature>
<feature type="domain" description="SCP" evidence="1">
    <location>
        <begin position="64"/>
        <end position="207"/>
    </location>
</feature>
<feature type="short sequence motif" description="Cell attachment site" evidence="5">
    <location>
        <begin position="31"/>
        <end position="33"/>
    </location>
</feature>
<feature type="short sequence motif" description="Cell attachment site" evidence="5">
    <location>
        <begin position="220"/>
        <end position="222"/>
    </location>
</feature>
<keyword id="KW-1217">Cell adhesion impairing toxin</keyword>
<keyword id="KW-0903">Direct protein sequencing</keyword>
<keyword id="KW-1199">Hemostasis impairing toxin</keyword>
<keyword id="KW-1201">Platelet aggregation inhibiting toxin</keyword>
<keyword id="KW-0964">Secreted</keyword>
<keyword id="KW-0732">Signal</keyword>
<keyword id="KW-0800">Toxin</keyword>
<name>INH4_TABYA</name>
<comment type="function">
    <text evidence="2">Inhibits platelet aggregation induced by all agonists tested (ADP, arachidonic acid, the thromboxane A2 analog U46619, thrombin, and snake venom snaclecs (TMVA that activates platelet through GPIB, and stejnulxin that specifically acts through GPVI (GP6))) (PubMed:19531497). May act by competing with fibrinogen for binding to glycoprotein IIb/IIIa (ITGA2B/ITGB3) (PubMed:19531497).</text>
</comment>
<comment type="subcellular location">
    <subcellularLocation>
        <location evidence="2">Secreted</location>
    </subcellularLocation>
</comment>
<comment type="tissue specificity">
    <text evidence="5">Expressed in salivary glands.</text>
</comment>
<comment type="similarity">
    <text evidence="4">Belongs to the CRISP family.</text>
</comment>
<dbReference type="EMBL" id="FJ469606">
    <property type="protein sequence ID" value="ACS72294.1"/>
    <property type="molecule type" value="mRNA"/>
</dbReference>
<dbReference type="SMR" id="C8YJ99"/>
<dbReference type="GO" id="GO:0005576">
    <property type="term" value="C:extracellular region"/>
    <property type="evidence" value="ECO:0007669"/>
    <property type="project" value="UniProtKB-SubCell"/>
</dbReference>
<dbReference type="GO" id="GO:0090729">
    <property type="term" value="F:toxin activity"/>
    <property type="evidence" value="ECO:0007669"/>
    <property type="project" value="UniProtKB-KW"/>
</dbReference>
<dbReference type="CDD" id="cd05380">
    <property type="entry name" value="CAP_euk"/>
    <property type="match status" value="1"/>
</dbReference>
<dbReference type="Gene3D" id="3.40.33.10">
    <property type="entry name" value="CAP"/>
    <property type="match status" value="1"/>
</dbReference>
<dbReference type="InterPro" id="IPR014044">
    <property type="entry name" value="CAP_dom"/>
</dbReference>
<dbReference type="InterPro" id="IPR035940">
    <property type="entry name" value="CAP_sf"/>
</dbReference>
<dbReference type="InterPro" id="IPR034763">
    <property type="entry name" value="P14a_insect"/>
</dbReference>
<dbReference type="Pfam" id="PF00188">
    <property type="entry name" value="CAP"/>
    <property type="match status" value="1"/>
</dbReference>
<dbReference type="PIRSF" id="PIRSF038921">
    <property type="entry name" value="P14a"/>
    <property type="match status" value="1"/>
</dbReference>
<dbReference type="SMART" id="SM00198">
    <property type="entry name" value="SCP"/>
    <property type="match status" value="1"/>
</dbReference>
<dbReference type="SUPFAM" id="SSF55797">
    <property type="entry name" value="PR-1-like"/>
    <property type="match status" value="1"/>
</dbReference>
<sequence length="249" mass="27778">MTLNVYFVLLSPYSLQSVPLPLTMQVIVPRRGDHVGCRNAGFGAHCGSNPQTPKLHQEHIKMVLQKTNWLRGVVAEGSFCYPKAARMPVLVWDDDLANLASLHTKGCVTETNKCRSTERFRSPGQSSYEISGDTLPSAMDILNFALRDWYLQKDNLTRKDIGSYPAGEDKGLKNMANLISDKVTAIGCGLTHWEEGKLKRALFTCNFSSSNVPGHPIYQRGDNFATKCAKTHPYYKSLCNSDEHIKPNK</sequence>
<accession>C8YJ99</accession>
<proteinExistence type="evidence at protein level"/>
<protein>
    <recommendedName>
        <fullName evidence="3">Tabinhibitin 4</fullName>
    </recommendedName>
</protein>
<reference evidence="6" key="1">
    <citation type="journal article" date="2009" name="Mol. Cell. Proteomics">
        <title>Anti-thrombosis repertoire of blood-feeding horsefly salivary glands.</title>
        <authorList>
            <person name="Ma D."/>
            <person name="Wang Y."/>
            <person name="Yang H."/>
            <person name="Wu J."/>
            <person name="An S."/>
            <person name="Gao L."/>
            <person name="Xu X."/>
            <person name="Lai R."/>
        </authorList>
    </citation>
    <scope>NUCLEOTIDE SEQUENCE [MRNA]</scope>
    <scope>PROTEIN SEQUENCE OF 24-48; 87-104; 122-145 AND 201-222</scope>
    <scope>SUBCELLULAR LOCATION</scope>
    <scope>FUNCTION</scope>
    <source>
        <tissue>Salivary gland</tissue>
    </source>
</reference>
<evidence type="ECO:0000255" key="1"/>
<evidence type="ECO:0000269" key="2">
    <source>
    </source>
</evidence>
<evidence type="ECO:0000303" key="3">
    <source>
    </source>
</evidence>
<evidence type="ECO:0000305" key="4"/>
<evidence type="ECO:0000305" key="5">
    <source>
    </source>
</evidence>
<evidence type="ECO:0000312" key="6">
    <source>
        <dbReference type="EMBL" id="ACS72294.1"/>
    </source>
</evidence>